<feature type="chain" id="PRO_0000250061" description="Anhydro-N-acetylmuramic acid kinase">
    <location>
        <begin position="1"/>
        <end position="369"/>
    </location>
</feature>
<feature type="binding site" evidence="1">
    <location>
        <begin position="12"/>
        <end position="19"/>
    </location>
    <ligand>
        <name>ATP</name>
        <dbReference type="ChEBI" id="CHEBI:30616"/>
    </ligand>
</feature>
<reference key="1">
    <citation type="journal article" date="2005" name="Nucleic Acids Res.">
        <title>Genome dynamics and diversity of Shigella species, the etiologic agents of bacillary dysentery.</title>
        <authorList>
            <person name="Yang F."/>
            <person name="Yang J."/>
            <person name="Zhang X."/>
            <person name="Chen L."/>
            <person name="Jiang Y."/>
            <person name="Yan Y."/>
            <person name="Tang X."/>
            <person name="Wang J."/>
            <person name="Xiong Z."/>
            <person name="Dong J."/>
            <person name="Xue Y."/>
            <person name="Zhu Y."/>
            <person name="Xu X."/>
            <person name="Sun L."/>
            <person name="Chen S."/>
            <person name="Nie H."/>
            <person name="Peng J."/>
            <person name="Xu J."/>
            <person name="Wang Y."/>
            <person name="Yuan Z."/>
            <person name="Wen Y."/>
            <person name="Yao Z."/>
            <person name="Shen Y."/>
            <person name="Qiang B."/>
            <person name="Hou Y."/>
            <person name="Yu J."/>
            <person name="Jin Q."/>
        </authorList>
    </citation>
    <scope>NUCLEOTIDE SEQUENCE [LARGE SCALE GENOMIC DNA]</scope>
    <source>
        <strain>Ss046</strain>
    </source>
</reference>
<comment type="function">
    <text evidence="1">Catalyzes the specific phosphorylation of 1,6-anhydro-N-acetylmuramic acid (anhMurNAc) with the simultaneous cleavage of the 1,6-anhydro ring, generating MurNAc-6-P. Is required for the utilization of anhMurNAc either imported from the medium or derived from its own cell wall murein, and thus plays a role in cell wall recycling.</text>
</comment>
<comment type="catalytic activity">
    <reaction evidence="1">
        <text>1,6-anhydro-N-acetyl-beta-muramate + ATP + H2O = N-acetyl-D-muramate 6-phosphate + ADP + H(+)</text>
        <dbReference type="Rhea" id="RHEA:24952"/>
        <dbReference type="ChEBI" id="CHEBI:15377"/>
        <dbReference type="ChEBI" id="CHEBI:15378"/>
        <dbReference type="ChEBI" id="CHEBI:30616"/>
        <dbReference type="ChEBI" id="CHEBI:58690"/>
        <dbReference type="ChEBI" id="CHEBI:58722"/>
        <dbReference type="ChEBI" id="CHEBI:456216"/>
        <dbReference type="EC" id="2.7.1.170"/>
    </reaction>
</comment>
<comment type="pathway">
    <text evidence="1">Amino-sugar metabolism; 1,6-anhydro-N-acetylmuramate degradation.</text>
</comment>
<comment type="pathway">
    <text evidence="1">Cell wall biogenesis; peptidoglycan recycling.</text>
</comment>
<comment type="similarity">
    <text evidence="1">Belongs to the anhydro-N-acetylmuramic acid kinase family.</text>
</comment>
<evidence type="ECO:0000255" key="1">
    <source>
        <dbReference type="HAMAP-Rule" id="MF_01270"/>
    </source>
</evidence>
<gene>
    <name evidence="1" type="primary">anmK</name>
    <name type="ordered locus">SSON_1516</name>
</gene>
<protein>
    <recommendedName>
        <fullName evidence="1">Anhydro-N-acetylmuramic acid kinase</fullName>
        <ecNumber evidence="1">2.7.1.170</ecNumber>
    </recommendedName>
    <alternativeName>
        <fullName evidence="1">AnhMurNAc kinase</fullName>
    </alternativeName>
</protein>
<proteinExistence type="inferred from homology"/>
<name>ANMK_SHISS</name>
<accession>Q3Z1Z6</accession>
<sequence>MKSGRFIGVMSGTSLDGVDVVLATIDEHRVAQLASLSWPIPVSLKQAVLDICQGQQLTLSQFGQLDTQLGRLFADAVNALLKEQNLQARDIVAIGCHGQTVWHEPTGVAPHTLQIGDNNQIVARTGITVVGDFRRRDIALGGQGAPLVPAFHHALLAHPTERRMVLNIGGIANLSLLIPGQPVGGYDTGPGNMLMDAWIWRQAGKPYDKDAEWARAGKVILPLLQNMLSDPYFSQPAPKSTGREYFNYGWLERHLRHFPGVDPRDVQATLAELTAVTISEQVLLSGGCERLMVCGGGSRNPLLMARLAALLPGTEVTTTDAVGISGDDMEALAFAWLAWRTLAGLPGNLPSVTGASQETVLGAIFPANP</sequence>
<dbReference type="EC" id="2.7.1.170" evidence="1"/>
<dbReference type="EMBL" id="CP000038">
    <property type="protein sequence ID" value="AAZ88216.1"/>
    <property type="molecule type" value="Genomic_DNA"/>
</dbReference>
<dbReference type="RefSeq" id="WP_000835077.1">
    <property type="nucleotide sequence ID" value="NC_007384.1"/>
</dbReference>
<dbReference type="SMR" id="Q3Z1Z6"/>
<dbReference type="GeneID" id="93775794"/>
<dbReference type="KEGG" id="ssn:SSON_1516"/>
<dbReference type="HOGENOM" id="CLU_038782_0_0_6"/>
<dbReference type="UniPathway" id="UPA00343"/>
<dbReference type="UniPathway" id="UPA00544"/>
<dbReference type="Proteomes" id="UP000002529">
    <property type="component" value="Chromosome"/>
</dbReference>
<dbReference type="GO" id="GO:0005524">
    <property type="term" value="F:ATP binding"/>
    <property type="evidence" value="ECO:0007669"/>
    <property type="project" value="UniProtKB-UniRule"/>
</dbReference>
<dbReference type="GO" id="GO:0016301">
    <property type="term" value="F:kinase activity"/>
    <property type="evidence" value="ECO:0007669"/>
    <property type="project" value="UniProtKB-KW"/>
</dbReference>
<dbReference type="GO" id="GO:0016773">
    <property type="term" value="F:phosphotransferase activity, alcohol group as acceptor"/>
    <property type="evidence" value="ECO:0007669"/>
    <property type="project" value="UniProtKB-UniRule"/>
</dbReference>
<dbReference type="GO" id="GO:0097175">
    <property type="term" value="P:1,6-anhydro-N-acetyl-beta-muramic acid catabolic process"/>
    <property type="evidence" value="ECO:0007669"/>
    <property type="project" value="UniProtKB-UniRule"/>
</dbReference>
<dbReference type="GO" id="GO:0006040">
    <property type="term" value="P:amino sugar metabolic process"/>
    <property type="evidence" value="ECO:0007669"/>
    <property type="project" value="InterPro"/>
</dbReference>
<dbReference type="GO" id="GO:0009254">
    <property type="term" value="P:peptidoglycan turnover"/>
    <property type="evidence" value="ECO:0007669"/>
    <property type="project" value="UniProtKB-UniRule"/>
</dbReference>
<dbReference type="CDD" id="cd24050">
    <property type="entry name" value="ASKHA_NBD_ANMK"/>
    <property type="match status" value="1"/>
</dbReference>
<dbReference type="FunFam" id="3.30.420.40:FF:000090">
    <property type="entry name" value="Anhydro-N-acetylmuramic acid kinase"/>
    <property type="match status" value="1"/>
</dbReference>
<dbReference type="Gene3D" id="3.30.420.40">
    <property type="match status" value="2"/>
</dbReference>
<dbReference type="HAMAP" id="MF_01270">
    <property type="entry name" value="AnhMurNAc_kinase"/>
    <property type="match status" value="1"/>
</dbReference>
<dbReference type="InterPro" id="IPR005338">
    <property type="entry name" value="Anhydro_N_Ac-Mur_kinase"/>
</dbReference>
<dbReference type="InterPro" id="IPR043129">
    <property type="entry name" value="ATPase_NBD"/>
</dbReference>
<dbReference type="NCBIfam" id="NF007138">
    <property type="entry name" value="PRK09585.1-1"/>
    <property type="match status" value="1"/>
</dbReference>
<dbReference type="NCBIfam" id="NF007139">
    <property type="entry name" value="PRK09585.1-3"/>
    <property type="match status" value="1"/>
</dbReference>
<dbReference type="NCBIfam" id="NF007148">
    <property type="entry name" value="PRK09585.3-2"/>
    <property type="match status" value="1"/>
</dbReference>
<dbReference type="PANTHER" id="PTHR30605">
    <property type="entry name" value="ANHYDRO-N-ACETYLMURAMIC ACID KINASE"/>
    <property type="match status" value="1"/>
</dbReference>
<dbReference type="PANTHER" id="PTHR30605:SF0">
    <property type="entry name" value="ANHYDRO-N-ACETYLMURAMIC ACID KINASE"/>
    <property type="match status" value="1"/>
</dbReference>
<dbReference type="Pfam" id="PF03702">
    <property type="entry name" value="AnmK"/>
    <property type="match status" value="1"/>
</dbReference>
<dbReference type="SUPFAM" id="SSF53067">
    <property type="entry name" value="Actin-like ATPase domain"/>
    <property type="match status" value="1"/>
</dbReference>
<keyword id="KW-0067">ATP-binding</keyword>
<keyword id="KW-0119">Carbohydrate metabolism</keyword>
<keyword id="KW-0418">Kinase</keyword>
<keyword id="KW-0547">Nucleotide-binding</keyword>
<keyword id="KW-1185">Reference proteome</keyword>
<keyword id="KW-0808">Transferase</keyword>
<organism>
    <name type="scientific">Shigella sonnei (strain Ss046)</name>
    <dbReference type="NCBI Taxonomy" id="300269"/>
    <lineage>
        <taxon>Bacteria</taxon>
        <taxon>Pseudomonadati</taxon>
        <taxon>Pseudomonadota</taxon>
        <taxon>Gammaproteobacteria</taxon>
        <taxon>Enterobacterales</taxon>
        <taxon>Enterobacteriaceae</taxon>
        <taxon>Shigella</taxon>
    </lineage>
</organism>